<feature type="signal peptide" evidence="1">
    <location>
        <begin position="1"/>
        <end position="17"/>
    </location>
</feature>
<feature type="chain" id="PRO_0000268613" description="Uncharacterized lipoprotein YsaB">
    <location>
        <begin position="18"/>
        <end position="100"/>
    </location>
</feature>
<feature type="lipid moiety-binding region" description="N-palmitoyl cysteine" evidence="1">
    <location>
        <position position="18"/>
    </location>
</feature>
<feature type="lipid moiety-binding region" description="S-diacylglycerol cysteine" evidence="1">
    <location>
        <position position="18"/>
    </location>
</feature>
<name>YSAB_SALCH</name>
<accession>Q57IG4</accession>
<proteinExistence type="inferred from homology"/>
<comment type="subcellular location">
    <subcellularLocation>
        <location evidence="1">Cell membrane</location>
        <topology evidence="1">Lipid-anchor</topology>
    </subcellularLocation>
</comment>
<dbReference type="EMBL" id="AE017220">
    <property type="protein sequence ID" value="AAX67498.1"/>
    <property type="molecule type" value="Genomic_DNA"/>
</dbReference>
<dbReference type="RefSeq" id="WP_000605590.1">
    <property type="nucleotide sequence ID" value="NC_006905.1"/>
</dbReference>
<dbReference type="KEGG" id="sec:SCH_3592"/>
<dbReference type="HOGENOM" id="CLU_162515_0_0_6"/>
<dbReference type="Proteomes" id="UP000000538">
    <property type="component" value="Chromosome"/>
</dbReference>
<dbReference type="GO" id="GO:0005886">
    <property type="term" value="C:plasma membrane"/>
    <property type="evidence" value="ECO:0007669"/>
    <property type="project" value="UniProtKB-SubCell"/>
</dbReference>
<dbReference type="InterPro" id="IPR025728">
    <property type="entry name" value="YsaB-like"/>
</dbReference>
<dbReference type="Pfam" id="PF13983">
    <property type="entry name" value="YsaB"/>
    <property type="match status" value="1"/>
</dbReference>
<dbReference type="PROSITE" id="PS51257">
    <property type="entry name" value="PROKAR_LIPOPROTEIN"/>
    <property type="match status" value="1"/>
</dbReference>
<protein>
    <recommendedName>
        <fullName>Uncharacterized lipoprotein YsaB</fullName>
    </recommendedName>
</protein>
<reference key="1">
    <citation type="journal article" date="2005" name="Nucleic Acids Res.">
        <title>The genome sequence of Salmonella enterica serovar Choleraesuis, a highly invasive and resistant zoonotic pathogen.</title>
        <authorList>
            <person name="Chiu C.-H."/>
            <person name="Tang P."/>
            <person name="Chu C."/>
            <person name="Hu S."/>
            <person name="Bao Q."/>
            <person name="Yu J."/>
            <person name="Chou Y.-Y."/>
            <person name="Wang H.-S."/>
            <person name="Lee Y.-S."/>
        </authorList>
    </citation>
    <scope>NUCLEOTIDE SEQUENCE [LARGE SCALE GENOMIC DNA]</scope>
    <source>
        <strain>SC-B67</strain>
    </source>
</reference>
<evidence type="ECO:0000255" key="1">
    <source>
        <dbReference type="PROSITE-ProRule" id="PRU00303"/>
    </source>
</evidence>
<gene>
    <name type="primary">ysaB</name>
    <name type="ordered locus">SCH_3592</name>
</gene>
<keyword id="KW-1003">Cell membrane</keyword>
<keyword id="KW-0449">Lipoprotein</keyword>
<keyword id="KW-0472">Membrane</keyword>
<keyword id="KW-0564">Palmitate</keyword>
<keyword id="KW-0732">Signal</keyword>
<sequence length="100" mass="11113">MIMKYFCSVMIAIALVGCTATPPPTQKAQQSKVSPTRTLDMEALCKAQAAQRYNTGAQKIAVTGFEQFQGSYEMRGNTFRKESFVCSFDADGQFLHLSMR</sequence>
<organism>
    <name type="scientific">Salmonella choleraesuis (strain SC-B67)</name>
    <dbReference type="NCBI Taxonomy" id="321314"/>
    <lineage>
        <taxon>Bacteria</taxon>
        <taxon>Pseudomonadati</taxon>
        <taxon>Pseudomonadota</taxon>
        <taxon>Gammaproteobacteria</taxon>
        <taxon>Enterobacterales</taxon>
        <taxon>Enterobacteriaceae</taxon>
        <taxon>Salmonella</taxon>
    </lineage>
</organism>